<keyword id="KW-0067">ATP-binding</keyword>
<keyword id="KW-0963">Cytoplasm</keyword>
<keyword id="KW-0903">Direct protein sequencing</keyword>
<keyword id="KW-0251">Elongation factor</keyword>
<keyword id="KW-0378">Hydrolase</keyword>
<keyword id="KW-0547">Nucleotide-binding</keyword>
<keyword id="KW-0648">Protein biosynthesis</keyword>
<keyword id="KW-1185">Reference proteome</keyword>
<keyword id="KW-0677">Repeat</keyword>
<keyword id="KW-0694">RNA-binding</keyword>
<gene>
    <name type="primary">CEF3</name>
    <name type="synonym">TEF3</name>
    <name type="ordered locus">CAALFM_C501580CA</name>
    <name type="ORF">CaO19.11629</name>
    <name type="ORF">CaO19.4152</name>
</gene>
<accession>P25997</accession>
<accession>A0A1D8PN72</accession>
<accession>Q59NQ0</accession>
<accession>Q59NU9</accession>
<protein>
    <recommendedName>
        <fullName evidence="5">Elongation factor 3</fullName>
        <shortName evidence="5">EF-3</shortName>
        <ecNumber evidence="1">3.6.4.-</ecNumber>
    </recommendedName>
    <alternativeName>
        <fullName evidence="5">Eukaryotic elongation factor 3</fullName>
        <shortName evidence="5">eEF3</shortName>
    </alternativeName>
</protein>
<reference key="1">
    <citation type="journal article" date="1992" name="Nucleic Acids Res.">
        <title>Isolation and sequence analysis of the gene for translation elongation factor 3 from Candida albicans.</title>
        <authorList>
            <person name="Myers K.K."/>
            <person name="Fonzi W.A."/>
            <person name="Sypherd P.S."/>
        </authorList>
    </citation>
    <scope>NUCLEOTIDE SEQUENCE [GENOMIC DNA]</scope>
    <source>
        <strain>SC5314 / ATCC MYA-2876</strain>
    </source>
</reference>
<reference key="2">
    <citation type="journal article" date="1992" name="Yeast">
        <title>Isolation and sequence analysis of the gene encoding translation elongation factor 3 from Candida albicans.</title>
        <authorList>
            <person name="Didomenico B."/>
            <person name="Lupisella J.A."/>
            <person name="Sandbaken M.G."/>
            <person name="Chakraburtty K."/>
        </authorList>
    </citation>
    <scope>NUCLEOTIDE SEQUENCE [GENOMIC DNA]</scope>
</reference>
<reference key="3">
    <citation type="journal article" date="2004" name="Proc. Natl. Acad. Sci. U.S.A.">
        <title>The diploid genome sequence of Candida albicans.</title>
        <authorList>
            <person name="Jones T."/>
            <person name="Federspiel N.A."/>
            <person name="Chibana H."/>
            <person name="Dungan J."/>
            <person name="Kalman S."/>
            <person name="Magee B.B."/>
            <person name="Newport G."/>
            <person name="Thorstenson Y.R."/>
            <person name="Agabian N."/>
            <person name="Magee P.T."/>
            <person name="Davis R.W."/>
            <person name="Scherer S."/>
        </authorList>
    </citation>
    <scope>NUCLEOTIDE SEQUENCE [LARGE SCALE GENOMIC DNA]</scope>
    <source>
        <strain>SC5314 / ATCC MYA-2876</strain>
    </source>
</reference>
<reference key="4">
    <citation type="journal article" date="2007" name="Genome Biol.">
        <title>Assembly of the Candida albicans genome into sixteen supercontigs aligned on the eight chromosomes.</title>
        <authorList>
            <person name="van het Hoog M."/>
            <person name="Rast T.J."/>
            <person name="Martchenko M."/>
            <person name="Grindle S."/>
            <person name="Dignard D."/>
            <person name="Hogues H."/>
            <person name="Cuomo C."/>
            <person name="Berriman M."/>
            <person name="Scherer S."/>
            <person name="Magee B.B."/>
            <person name="Whiteway M."/>
            <person name="Chibana H."/>
            <person name="Nantel A."/>
            <person name="Magee P.T."/>
        </authorList>
    </citation>
    <scope>GENOME REANNOTATION</scope>
    <source>
        <strain>SC5314 / ATCC MYA-2876</strain>
    </source>
</reference>
<reference key="5">
    <citation type="journal article" date="2013" name="Genome Biol.">
        <title>Assembly of a phased diploid Candida albicans genome facilitates allele-specific measurements and provides a simple model for repeat and indel structure.</title>
        <authorList>
            <person name="Muzzey D."/>
            <person name="Schwartz K."/>
            <person name="Weissman J.S."/>
            <person name="Sherlock G."/>
        </authorList>
    </citation>
    <scope>NUCLEOTIDE SEQUENCE [LARGE SCALE GENOMIC DNA]</scope>
    <scope>GENOME REANNOTATION</scope>
    <source>
        <strain>SC5314 / ATCC MYA-2876</strain>
    </source>
</reference>
<reference key="6">
    <citation type="journal article" date="1992" name="Mol. Microbiol.">
        <title>Elongation factor 3 (EF-3) from Candida albicans shows both structural and functional similarity to EF-3 from Saccharomyces cerevisiae.</title>
        <authorList>
            <person name="Colhurst D.R."/>
            <person name="Schauder B.S."/>
            <person name="Hyaes M.V."/>
            <person name="Tuite M.F."/>
        </authorList>
    </citation>
    <scope>NUCLEOTIDE SEQUENCE [GENOMIC DNA] OF 83-148</scope>
</reference>
<reference key="7">
    <citation type="journal article" date="2004" name="Proteomics">
        <title>Proteomics-based identification of novel Candida albicans antigens for diagnosis of systemic candidiasis in patients with underlying hematological malignancies.</title>
        <authorList>
            <person name="Pitarch A."/>
            <person name="Abian J."/>
            <person name="Carrascal M."/>
            <person name="Sanchez M."/>
            <person name="Nombela C."/>
            <person name="Gil C."/>
        </authorList>
    </citation>
    <scope>PROTEIN SEQUENCE OF 301-306 AND 309-310</scope>
    <scope>SUBCELLULAR LOCATION</scope>
    <scope>ANTIGENICITY</scope>
    <source>
        <strain>SC5314 / ATCC MYA-2876</strain>
        <tissue>Protoplast</tissue>
    </source>
</reference>
<feature type="chain" id="PRO_0000093454" description="Elongation factor 3">
    <location>
        <begin position="1"/>
        <end position="1050"/>
    </location>
</feature>
<feature type="repeat" description="HEAT 1">
    <location>
        <begin position="46"/>
        <end position="83"/>
    </location>
</feature>
<feature type="repeat" description="HEAT 2">
    <location>
        <begin position="89"/>
        <end position="126"/>
    </location>
</feature>
<feature type="repeat" description="HEAT 3">
    <location>
        <begin position="127"/>
        <end position="165"/>
    </location>
</feature>
<feature type="repeat" description="HEAT 4">
    <location>
        <begin position="169"/>
        <end position="206"/>
    </location>
</feature>
<feature type="repeat" description="HEAT 5">
    <location>
        <begin position="208"/>
        <end position="244"/>
    </location>
</feature>
<feature type="repeat" description="HEAT 6">
    <location>
        <begin position="245"/>
        <end position="282"/>
    </location>
</feature>
<feature type="repeat" description="HEAT 7">
    <location>
        <begin position="288"/>
        <end position="326"/>
    </location>
</feature>
<feature type="domain" description="ABC transporter 1" evidence="2">
    <location>
        <begin position="429"/>
        <end position="646"/>
    </location>
</feature>
<feature type="domain" description="ABC transporter 2" evidence="2">
    <location>
        <begin position="672"/>
        <end position="998"/>
    </location>
</feature>
<feature type="region of interest" description="Disordered" evidence="3">
    <location>
        <begin position="980"/>
        <end position="1050"/>
    </location>
</feature>
<feature type="compositionally biased region" description="Basic residues" evidence="3">
    <location>
        <begin position="1013"/>
        <end position="1037"/>
    </location>
</feature>
<feature type="binding site" evidence="1">
    <location>
        <position position="43"/>
    </location>
    <ligand>
        <name>ADP</name>
        <dbReference type="ChEBI" id="CHEBI:456216"/>
    </ligand>
</feature>
<feature type="binding site" evidence="1">
    <location>
        <position position="45"/>
    </location>
    <ligand>
        <name>ADP</name>
        <dbReference type="ChEBI" id="CHEBI:456216"/>
    </ligand>
</feature>
<feature type="binding site" evidence="1">
    <location>
        <position position="86"/>
    </location>
    <ligand>
        <name>ADP</name>
        <dbReference type="ChEBI" id="CHEBI:456216"/>
    </ligand>
</feature>
<feature type="binding site" evidence="1">
    <location>
        <position position="395"/>
    </location>
    <ligand>
        <name>ADP</name>
        <dbReference type="ChEBI" id="CHEBI:456216"/>
    </ligand>
</feature>
<feature type="binding site" evidence="1">
    <location>
        <position position="399"/>
    </location>
    <ligand>
        <name>ADP</name>
        <dbReference type="ChEBI" id="CHEBI:456216"/>
    </ligand>
</feature>
<feature type="binding site" evidence="1">
    <location>
        <position position="400"/>
    </location>
    <ligand>
        <name>ADP</name>
        <dbReference type="ChEBI" id="CHEBI:456216"/>
    </ligand>
</feature>
<feature type="binding site" evidence="1">
    <location>
        <position position="708"/>
    </location>
    <ligand>
        <name>ADP</name>
        <dbReference type="ChEBI" id="CHEBI:456216"/>
    </ligand>
</feature>
<feature type="binding site" evidence="1">
    <location>
        <position position="927"/>
    </location>
    <ligand>
        <name>ADP</name>
        <dbReference type="ChEBI" id="CHEBI:456216"/>
    </ligand>
</feature>
<feature type="binding site" evidence="1">
    <location>
        <position position="930"/>
    </location>
    <ligand>
        <name>ADP</name>
        <dbReference type="ChEBI" id="CHEBI:456216"/>
    </ligand>
</feature>
<feature type="binding site" evidence="1">
    <location>
        <position position="956"/>
    </location>
    <ligand>
        <name>ADP</name>
        <dbReference type="ChEBI" id="CHEBI:456216"/>
    </ligand>
</feature>
<feature type="sequence conflict" description="In Ref. 6; no nucleotide entry." evidence="5" ref="6">
    <original>T</original>
    <variation>A</variation>
    <location>
        <position position="111"/>
    </location>
</feature>
<feature type="sequence conflict" description="In Ref. 1; CAA77567." evidence="5" ref="1">
    <location>
        <position position="300"/>
    </location>
</feature>
<feature type="sequence conflict" description="In Ref. 1; CAA77567 and 2; CAA78282." evidence="5" ref="1 2">
    <original>S</original>
    <variation>T</variation>
    <location>
        <position position="331"/>
    </location>
</feature>
<feature type="sequence conflict" description="In Ref. 1; CAA77567." evidence="5" ref="1">
    <original>V</original>
    <variation>F</variation>
    <location>
        <position position="730"/>
    </location>
</feature>
<sequence>MSAASESKYSTEVLSELLSKLQVADNKDEAASNISTFLNSSIVEHDVPVEFFEDLKKQIQSKDAKVSLAALDAYKHIASTNGLSPSVEPYVVDLVSEVAVKAGDKNKDVQTAASDALLAIASAITPTAVKAILPKLIDNLTNTNKWTEKVAILRAVSQLVDTAKAQIALRMPELIPVLSESMWDTKKEVKEAATATMTKSTETIDNKDIEKFIPQLISCIAKPTEVPETVHLLGATTFVSEVTMATLSIMAPLLSRGLAERDTAIKRKAAVIVDNMCKLVEDPQIVAPFMDKLLPGLKNNFANMADPEAREVTQRALNTLRRVGAVGENDSIPEVSTAGDIDVTLNEFNKLVADKKIAKRFDVALNYIAAIAGDLVDEREIQPEAWLQNVLPFATIFLHEKEAKEIIEEFRKRAIDNIPQPPSFEDEEDEGEDLCNCEFSLAYGAKILLNKTQFRLKRNRRYGLCGPNGAGKSTLMRAIANGQVEGFPTQDECKTVYVEHDIDGTHADTTVVEFVIEDGEVGLTKDVVVDKLREFNFSDEMINMPIQSLSGGWKMKLALARAVLKNADILLLDEPTNHLDTVNVAWLVNYLNTCGITSIIVSHDSGFLDNVTQYIIHYEGFKLRKYKGNLSEFVKKCPSAQSYYELGASDLEFRFPEPGFLEGVKTKQKAIVKVSNMSFQYPGTSKPQIQDINFQCSLSSRIAVIGPNGAGKSTLINVLTGELLPTTGEVYVHENCRIAYIKQHAFAHIDNHLDKTPSEYIQWRFQTGEDRETMDRASRQINEEDEQNMNKIFKIEGTPRRIAGIHARRKFKNSYEYEISWMLGENIGMKNERWVPMMSVDNTWLPRGELMETHAKLVAEVDMKEALASGQFRPLTRKEIEEHCAMLGLDAELVSHSRIRGLSGGQKVKLVLAACTWQRPHLIVLDEPTNYLDRDSLGALSKALKAFEGGIVIITHSAEFTKDLTEEVWAVLDGRMTPSGHNWVQGQGSGPRIEKKDDEEEDKFDAMGNKIAAAKKKKKLSSAELRKKKKERMKKKKELGDAYVSSDEEF</sequence>
<organism>
    <name type="scientific">Candida albicans (strain SC5314 / ATCC MYA-2876)</name>
    <name type="common">Yeast</name>
    <dbReference type="NCBI Taxonomy" id="237561"/>
    <lineage>
        <taxon>Eukaryota</taxon>
        <taxon>Fungi</taxon>
        <taxon>Dikarya</taxon>
        <taxon>Ascomycota</taxon>
        <taxon>Saccharomycotina</taxon>
        <taxon>Pichiomycetes</taxon>
        <taxon>Debaryomycetaceae</taxon>
        <taxon>Candida/Lodderomyces clade</taxon>
        <taxon>Candida</taxon>
    </lineage>
</organism>
<evidence type="ECO:0000250" key="1">
    <source>
        <dbReference type="UniProtKB" id="P16521"/>
    </source>
</evidence>
<evidence type="ECO:0000255" key="2">
    <source>
        <dbReference type="PROSITE-ProRule" id="PRU00434"/>
    </source>
</evidence>
<evidence type="ECO:0000256" key="3">
    <source>
        <dbReference type="SAM" id="MobiDB-lite"/>
    </source>
</evidence>
<evidence type="ECO:0000269" key="4">
    <source>
    </source>
</evidence>
<evidence type="ECO:0000305" key="5"/>
<proteinExistence type="evidence at protein level"/>
<dbReference type="EC" id="3.6.4.-" evidence="1"/>
<dbReference type="EMBL" id="Z11484">
    <property type="protein sequence ID" value="CAA77567.1"/>
    <property type="molecule type" value="Genomic_DNA"/>
</dbReference>
<dbReference type="EMBL" id="Z12822">
    <property type="protein sequence ID" value="CAA78282.1"/>
    <property type="molecule type" value="Genomic_DNA"/>
</dbReference>
<dbReference type="EMBL" id="CP017627">
    <property type="protein sequence ID" value="AOW29591.1"/>
    <property type="molecule type" value="Genomic_DNA"/>
</dbReference>
<dbReference type="PIR" id="S25363">
    <property type="entry name" value="S25363"/>
</dbReference>
<dbReference type="RefSeq" id="XP_711356.2">
    <property type="nucleotide sequence ID" value="XM_706264.2"/>
</dbReference>
<dbReference type="SMR" id="P25997"/>
<dbReference type="BioGRID" id="1230099">
    <property type="interactions" value="2"/>
</dbReference>
<dbReference type="FunCoup" id="P25997">
    <property type="interactions" value="802"/>
</dbReference>
<dbReference type="STRING" id="237561.P25997"/>
<dbReference type="EnsemblFungi" id="C5_01580C_A-T">
    <property type="protein sequence ID" value="C5_01580C_A-T-p1"/>
    <property type="gene ID" value="C5_01580C_A"/>
</dbReference>
<dbReference type="GeneID" id="3647040"/>
<dbReference type="KEGG" id="cal:CAALFM_C501580CA"/>
<dbReference type="CGD" id="CAL0000190871">
    <property type="gene designation" value="CEF3"/>
</dbReference>
<dbReference type="VEuPathDB" id="FungiDB:C5_01580C_A"/>
<dbReference type="eggNOG" id="KOG0062">
    <property type="taxonomic scope" value="Eukaryota"/>
</dbReference>
<dbReference type="eggNOG" id="KOG1242">
    <property type="taxonomic scope" value="Eukaryota"/>
</dbReference>
<dbReference type="HOGENOM" id="CLU_002848_0_0_1"/>
<dbReference type="InParanoid" id="P25997"/>
<dbReference type="OrthoDB" id="2110130at2759"/>
<dbReference type="UniPathway" id="UPA00345"/>
<dbReference type="PRO" id="PR:P25997"/>
<dbReference type="Proteomes" id="UP000000559">
    <property type="component" value="Chromosome 5"/>
</dbReference>
<dbReference type="GO" id="GO:0009986">
    <property type="term" value="C:cell surface"/>
    <property type="evidence" value="ECO:0000314"/>
    <property type="project" value="CGD"/>
</dbReference>
<dbReference type="GO" id="GO:0005737">
    <property type="term" value="C:cytoplasm"/>
    <property type="evidence" value="ECO:0007669"/>
    <property type="project" value="UniProtKB-SubCell"/>
</dbReference>
<dbReference type="GO" id="GO:0005886">
    <property type="term" value="C:plasma membrane"/>
    <property type="evidence" value="ECO:0000314"/>
    <property type="project" value="CGD"/>
</dbReference>
<dbReference type="GO" id="GO:0030445">
    <property type="term" value="C:yeast-form cell wall"/>
    <property type="evidence" value="ECO:0000314"/>
    <property type="project" value="CGD"/>
</dbReference>
<dbReference type="GO" id="GO:0005524">
    <property type="term" value="F:ATP binding"/>
    <property type="evidence" value="ECO:0000318"/>
    <property type="project" value="GO_Central"/>
</dbReference>
<dbReference type="GO" id="GO:0016887">
    <property type="term" value="F:ATP hydrolysis activity"/>
    <property type="evidence" value="ECO:0000314"/>
    <property type="project" value="CGD"/>
</dbReference>
<dbReference type="GO" id="GO:0003924">
    <property type="term" value="F:GTPase activity"/>
    <property type="evidence" value="ECO:0000250"/>
    <property type="project" value="CGD"/>
</dbReference>
<dbReference type="GO" id="GO:0003723">
    <property type="term" value="F:RNA binding"/>
    <property type="evidence" value="ECO:0007669"/>
    <property type="project" value="UniProtKB-KW"/>
</dbReference>
<dbReference type="GO" id="GO:0003746">
    <property type="term" value="F:translation elongation factor activity"/>
    <property type="evidence" value="ECO:0000316"/>
    <property type="project" value="CGD"/>
</dbReference>
<dbReference type="GO" id="GO:0006414">
    <property type="term" value="P:translational elongation"/>
    <property type="evidence" value="ECO:0000316"/>
    <property type="project" value="CGD"/>
</dbReference>
<dbReference type="CDD" id="cd03221">
    <property type="entry name" value="ABCF_EF-3"/>
    <property type="match status" value="1"/>
</dbReference>
<dbReference type="CDD" id="cd18626">
    <property type="entry name" value="CD_eEF3"/>
    <property type="match status" value="1"/>
</dbReference>
<dbReference type="FunFam" id="1.20.1390.20:FF:000001">
    <property type="entry name" value="Elongation factor 3"/>
    <property type="match status" value="1"/>
</dbReference>
<dbReference type="FunFam" id="1.25.10.10:FF:000076">
    <property type="entry name" value="Elongation factor 3"/>
    <property type="match status" value="1"/>
</dbReference>
<dbReference type="FunFam" id="2.40.50.990:FF:000001">
    <property type="entry name" value="Elongation factor 3"/>
    <property type="match status" value="1"/>
</dbReference>
<dbReference type="FunFam" id="3.40.50.300:FF:000193">
    <property type="entry name" value="Probable Elongation factor 3"/>
    <property type="match status" value="1"/>
</dbReference>
<dbReference type="Gene3D" id="1.20.1390.20">
    <property type="match status" value="1"/>
</dbReference>
<dbReference type="Gene3D" id="2.40.50.990">
    <property type="match status" value="1"/>
</dbReference>
<dbReference type="Gene3D" id="1.25.10.10">
    <property type="entry name" value="Leucine-rich Repeat Variant"/>
    <property type="match status" value="1"/>
</dbReference>
<dbReference type="Gene3D" id="3.40.50.300">
    <property type="entry name" value="P-loop containing nucleotide triphosphate hydrolases"/>
    <property type="match status" value="2"/>
</dbReference>
<dbReference type="InterPro" id="IPR003593">
    <property type="entry name" value="AAA+_ATPase"/>
</dbReference>
<dbReference type="InterPro" id="IPR003439">
    <property type="entry name" value="ABC_transporter-like_ATP-bd"/>
</dbReference>
<dbReference type="InterPro" id="IPR017871">
    <property type="entry name" value="ABC_transporter-like_CS"/>
</dbReference>
<dbReference type="InterPro" id="IPR050611">
    <property type="entry name" value="ABCF_EF3_subfamily"/>
</dbReference>
<dbReference type="InterPro" id="IPR011989">
    <property type="entry name" value="ARM-like"/>
</dbReference>
<dbReference type="InterPro" id="IPR016024">
    <property type="entry name" value="ARM-type_fold"/>
</dbReference>
<dbReference type="InterPro" id="IPR015688">
    <property type="entry name" value="eEF3_ABC2_chromodomain-like"/>
</dbReference>
<dbReference type="InterPro" id="IPR047038">
    <property type="entry name" value="eEF3_chromodomain-like_sf"/>
</dbReference>
<dbReference type="InterPro" id="IPR040533">
    <property type="entry name" value="EF3_4HB"/>
</dbReference>
<dbReference type="InterPro" id="IPR047036">
    <property type="entry name" value="EF3_4HB_sf"/>
</dbReference>
<dbReference type="InterPro" id="IPR021133">
    <property type="entry name" value="HEAT_type_2"/>
</dbReference>
<dbReference type="InterPro" id="IPR027417">
    <property type="entry name" value="P-loop_NTPase"/>
</dbReference>
<dbReference type="PANTHER" id="PTHR19211">
    <property type="entry name" value="ATP-BINDING TRANSPORT PROTEIN-RELATED"/>
    <property type="match status" value="1"/>
</dbReference>
<dbReference type="PANTHER" id="PTHR19211:SF5">
    <property type="entry name" value="ELONGATION FACTOR 3A-RELATED"/>
    <property type="match status" value="1"/>
</dbReference>
<dbReference type="Pfam" id="PF17947">
    <property type="entry name" value="4HB"/>
    <property type="match status" value="1"/>
</dbReference>
<dbReference type="Pfam" id="PF00005">
    <property type="entry name" value="ABC_tran"/>
    <property type="match status" value="3"/>
</dbReference>
<dbReference type="Pfam" id="PF24984">
    <property type="entry name" value="HEAT_EF3_GNC1"/>
    <property type="match status" value="1"/>
</dbReference>
<dbReference type="Pfam" id="PF24987">
    <property type="entry name" value="HEAT_EF3_N"/>
    <property type="match status" value="1"/>
</dbReference>
<dbReference type="SMART" id="SM00382">
    <property type="entry name" value="AAA"/>
    <property type="match status" value="2"/>
</dbReference>
<dbReference type="SUPFAM" id="SSF48371">
    <property type="entry name" value="ARM repeat"/>
    <property type="match status" value="1"/>
</dbReference>
<dbReference type="SUPFAM" id="SSF52540">
    <property type="entry name" value="P-loop containing nucleoside triphosphate hydrolases"/>
    <property type="match status" value="2"/>
</dbReference>
<dbReference type="PROSITE" id="PS00211">
    <property type="entry name" value="ABC_TRANSPORTER_1"/>
    <property type="match status" value="2"/>
</dbReference>
<dbReference type="PROSITE" id="PS50893">
    <property type="entry name" value="ABC_TRANSPORTER_2"/>
    <property type="match status" value="2"/>
</dbReference>
<dbReference type="PROSITE" id="PS50077">
    <property type="entry name" value="HEAT_REPEAT"/>
    <property type="match status" value="1"/>
</dbReference>
<name>EF3_CANAL</name>
<comment type="function">
    <text evidence="1">Ribosome-dependent ATPase that functions in cytoplasmic translation elongation (By similarity). Required for the ATP-dependent release of deacylated tRNA from the ribosomal E-site during protein biosynthesis (By similarity). Stimulates the eEF1A-dependent binding of aminoacyl-tRNA to the ribosomal A-site, which has reduced affinity for tRNA as long as the E-site is occupied (By similarity). Assists translation termination by stimulating the release of nascent protein from the ribosome by release factors (By similarity).</text>
</comment>
<comment type="catalytic activity">
    <reaction evidence="1">
        <text>ATP + H2O = ADP + phosphate + H(+)</text>
        <dbReference type="Rhea" id="RHEA:13065"/>
        <dbReference type="ChEBI" id="CHEBI:15377"/>
        <dbReference type="ChEBI" id="CHEBI:15378"/>
        <dbReference type="ChEBI" id="CHEBI:30616"/>
        <dbReference type="ChEBI" id="CHEBI:43474"/>
        <dbReference type="ChEBI" id="CHEBI:456216"/>
    </reaction>
</comment>
<comment type="pathway">
    <text evidence="5">Protein biosynthesis; polypeptide chain elongation.</text>
</comment>
<comment type="subunit">
    <text evidence="1">Monomer.</text>
</comment>
<comment type="subcellular location">
    <subcellularLocation>
        <location evidence="4">Cytoplasm</location>
    </subcellularLocation>
</comment>
<comment type="miscellaneous">
    <text>Has antigenic properties.</text>
</comment>
<comment type="similarity">
    <text evidence="5">Belongs to the ABC transporter superfamily. ABCF family. EF3 subfamily.</text>
</comment>